<comment type="function">
    <text evidence="1">Catalyzes a reaction of the Smirnoff-Wheeler pathway, the major route to ascorbate biosynthesis in plants.</text>
</comment>
<comment type="catalytic activity">
    <reaction>
        <text>alpha-D-mannose 1-phosphate + GTP + H(+) = GDP-alpha-D-mannose + diphosphate</text>
        <dbReference type="Rhea" id="RHEA:15229"/>
        <dbReference type="ChEBI" id="CHEBI:15378"/>
        <dbReference type="ChEBI" id="CHEBI:33019"/>
        <dbReference type="ChEBI" id="CHEBI:37565"/>
        <dbReference type="ChEBI" id="CHEBI:57527"/>
        <dbReference type="ChEBI" id="CHEBI:58409"/>
        <dbReference type="EC" id="2.7.7.13"/>
    </reaction>
</comment>
<comment type="pathway">
    <text>Nucleotide-sugar biosynthesis; GDP-alpha-D-mannose biosynthesis; GDP-alpha-D-mannose from alpha-D-mannose 1-phosphate (GTP route): step 1/1.</text>
</comment>
<comment type="similarity">
    <text evidence="3">Belongs to the transferase hexapeptide repeat family.</text>
</comment>
<comment type="sequence caution" evidence="3">
    <conflict type="erroneous gene model prediction">
        <sequence resource="EMBL-CDS" id="BAF23234"/>
    </conflict>
</comment>
<evidence type="ECO:0000250" key="1"/>
<evidence type="ECO:0000250" key="2">
    <source>
        <dbReference type="UniProtKB" id="O22287"/>
    </source>
</evidence>
<evidence type="ECO:0000305" key="3"/>
<protein>
    <recommendedName>
        <fullName>Probable mannose-1-phosphate guanylyltransferase 3</fullName>
        <ecNumber>2.7.7.13</ecNumber>
    </recommendedName>
</protein>
<keyword id="KW-0342">GTP-binding</keyword>
<keyword id="KW-0547">Nucleotide-binding</keyword>
<keyword id="KW-0548">Nucleotidyltransferase</keyword>
<keyword id="KW-1185">Reference proteome</keyword>
<keyword id="KW-0808">Transferase</keyword>
<gene>
    <name type="ordered locus">Os08g0237200</name>
    <name type="ordered locus">LOC_Os08g13930</name>
    <name type="ORF">OsJ_04069</name>
    <name type="ORF">P0682A06.20</name>
</gene>
<proteinExistence type="evidence at transcript level"/>
<dbReference type="EC" id="2.7.7.13"/>
<dbReference type="EMBL" id="AP004705">
    <property type="protein sequence ID" value="BAD05471.1"/>
    <property type="molecule type" value="Genomic_DNA"/>
</dbReference>
<dbReference type="EMBL" id="AP008214">
    <property type="protein sequence ID" value="BAF23234.2"/>
    <property type="status" value="ALT_SEQ"/>
    <property type="molecule type" value="Genomic_DNA"/>
</dbReference>
<dbReference type="EMBL" id="AP014964">
    <property type="protein sequence ID" value="BAT04472.1"/>
    <property type="molecule type" value="Genomic_DNA"/>
</dbReference>
<dbReference type="EMBL" id="CM000138">
    <property type="protein sequence ID" value="EAZ14142.1"/>
    <property type="molecule type" value="Genomic_DNA"/>
</dbReference>
<dbReference type="EMBL" id="AK243016">
    <property type="protein sequence ID" value="BAH01407.1"/>
    <property type="molecule type" value="mRNA"/>
</dbReference>
<dbReference type="RefSeq" id="XP_015650623.1">
    <property type="nucleotide sequence ID" value="XM_015795137.1"/>
</dbReference>
<dbReference type="RefSeq" id="XP_015650624.1">
    <property type="nucleotide sequence ID" value="XM_015795138.1"/>
</dbReference>
<dbReference type="SMR" id="Q6Z9A3"/>
<dbReference type="BioGRID" id="814058">
    <property type="interactions" value="1"/>
</dbReference>
<dbReference type="FunCoup" id="Q6Z9A3">
    <property type="interactions" value="1922"/>
</dbReference>
<dbReference type="STRING" id="39947.Q6Z9A3"/>
<dbReference type="PaxDb" id="39947-Q6Z9A3"/>
<dbReference type="EnsemblPlants" id="Os08t0237200-01">
    <property type="protein sequence ID" value="Os08t0237200-01"/>
    <property type="gene ID" value="Os08g0237200"/>
</dbReference>
<dbReference type="Gramene" id="Os08t0237200-01">
    <property type="protein sequence ID" value="Os08t0237200-01"/>
    <property type="gene ID" value="Os08g0237200"/>
</dbReference>
<dbReference type="KEGG" id="dosa:Os08g0237200"/>
<dbReference type="eggNOG" id="KOG1322">
    <property type="taxonomic scope" value="Eukaryota"/>
</dbReference>
<dbReference type="HOGENOM" id="CLU_029499_0_0_1"/>
<dbReference type="InParanoid" id="Q6Z9A3"/>
<dbReference type="OMA" id="GPNCWIC"/>
<dbReference type="OrthoDB" id="1733332at2759"/>
<dbReference type="BRENDA" id="2.7.7.13">
    <property type="organism ID" value="8948"/>
</dbReference>
<dbReference type="PlantReactome" id="R-OSA-1119410">
    <property type="pathway name" value="Ascorbate biosynthesis"/>
</dbReference>
<dbReference type="UniPathway" id="UPA00126">
    <property type="reaction ID" value="UER00930"/>
</dbReference>
<dbReference type="Proteomes" id="UP000000763">
    <property type="component" value="Chromosome 8"/>
</dbReference>
<dbReference type="Proteomes" id="UP000007752">
    <property type="component" value="Chromosome 1"/>
</dbReference>
<dbReference type="Proteomes" id="UP000059680">
    <property type="component" value="Chromosome 8"/>
</dbReference>
<dbReference type="GO" id="GO:0005737">
    <property type="term" value="C:cytoplasm"/>
    <property type="evidence" value="ECO:0000318"/>
    <property type="project" value="GO_Central"/>
</dbReference>
<dbReference type="GO" id="GO:0005525">
    <property type="term" value="F:GTP binding"/>
    <property type="evidence" value="ECO:0007669"/>
    <property type="project" value="UniProtKB-KW"/>
</dbReference>
<dbReference type="GO" id="GO:0004475">
    <property type="term" value="F:mannose-1-phosphate guanylyltransferase (GTP) activity"/>
    <property type="evidence" value="ECO:0000318"/>
    <property type="project" value="GO_Central"/>
</dbReference>
<dbReference type="GO" id="GO:0009298">
    <property type="term" value="P:GDP-mannose biosynthetic process"/>
    <property type="evidence" value="ECO:0000318"/>
    <property type="project" value="GO_Central"/>
</dbReference>
<dbReference type="GO" id="GO:0006486">
    <property type="term" value="P:protein glycosylation"/>
    <property type="evidence" value="ECO:0000318"/>
    <property type="project" value="GO_Central"/>
</dbReference>
<dbReference type="CDD" id="cd06425">
    <property type="entry name" value="M1P_guanylylT_B_like_N"/>
    <property type="match status" value="1"/>
</dbReference>
<dbReference type="FunFam" id="3.90.550.10:FF:000013">
    <property type="entry name" value="mannose-1-phosphate guanyltransferase beta"/>
    <property type="match status" value="1"/>
</dbReference>
<dbReference type="Gene3D" id="2.160.10.10">
    <property type="entry name" value="Hexapeptide repeat proteins"/>
    <property type="match status" value="1"/>
</dbReference>
<dbReference type="Gene3D" id="3.90.550.10">
    <property type="entry name" value="Spore Coat Polysaccharide Biosynthesis Protein SpsA, Chain A"/>
    <property type="match status" value="1"/>
</dbReference>
<dbReference type="InterPro" id="IPR056729">
    <property type="entry name" value="GMPPB_C"/>
</dbReference>
<dbReference type="InterPro" id="IPR045233">
    <property type="entry name" value="GMPPB_N"/>
</dbReference>
<dbReference type="InterPro" id="IPR018357">
    <property type="entry name" value="Hexapep_transf_CS"/>
</dbReference>
<dbReference type="InterPro" id="IPR050486">
    <property type="entry name" value="Mannose-1P_guanyltransferase"/>
</dbReference>
<dbReference type="InterPro" id="IPR005835">
    <property type="entry name" value="NTP_transferase_dom"/>
</dbReference>
<dbReference type="InterPro" id="IPR029044">
    <property type="entry name" value="Nucleotide-diphossugar_trans"/>
</dbReference>
<dbReference type="PANTHER" id="PTHR22572">
    <property type="entry name" value="SUGAR-1-PHOSPHATE GUANYL TRANSFERASE"/>
    <property type="match status" value="1"/>
</dbReference>
<dbReference type="Pfam" id="PF25087">
    <property type="entry name" value="GMPPB_C"/>
    <property type="match status" value="1"/>
</dbReference>
<dbReference type="Pfam" id="PF00483">
    <property type="entry name" value="NTP_transferase"/>
    <property type="match status" value="1"/>
</dbReference>
<dbReference type="SUPFAM" id="SSF53448">
    <property type="entry name" value="Nucleotide-diphospho-sugar transferases"/>
    <property type="match status" value="1"/>
</dbReference>
<dbReference type="PROSITE" id="PS00101">
    <property type="entry name" value="HEXAPEP_TRANSFERASES"/>
    <property type="match status" value="1"/>
</dbReference>
<accession>Q6Z9A3</accession>
<accession>A0A0P0XD92</accession>
<accession>Q0J731</accession>
<organism>
    <name type="scientific">Oryza sativa subsp. japonica</name>
    <name type="common">Rice</name>
    <dbReference type="NCBI Taxonomy" id="39947"/>
    <lineage>
        <taxon>Eukaryota</taxon>
        <taxon>Viridiplantae</taxon>
        <taxon>Streptophyta</taxon>
        <taxon>Embryophyta</taxon>
        <taxon>Tracheophyta</taxon>
        <taxon>Spermatophyta</taxon>
        <taxon>Magnoliopsida</taxon>
        <taxon>Liliopsida</taxon>
        <taxon>Poales</taxon>
        <taxon>Poaceae</taxon>
        <taxon>BOP clade</taxon>
        <taxon>Oryzoideae</taxon>
        <taxon>Oryzeae</taxon>
        <taxon>Oryzinae</taxon>
        <taxon>Oryza</taxon>
        <taxon>Oryza sativa</taxon>
    </lineage>
</organism>
<feature type="chain" id="PRO_0000412469" description="Probable mannose-1-phosphate guanylyltransferase 3">
    <location>
        <begin position="1"/>
        <end position="361"/>
    </location>
</feature>
<feature type="binding site" evidence="2">
    <location>
        <position position="6"/>
    </location>
    <ligand>
        <name>GDP-alpha-D-mannose</name>
        <dbReference type="ChEBI" id="CHEBI:57527"/>
    </ligand>
</feature>
<feature type="binding site" evidence="2">
    <location>
        <position position="7"/>
    </location>
    <ligand>
        <name>GDP-alpha-D-mannose</name>
        <dbReference type="ChEBI" id="CHEBI:57527"/>
    </ligand>
</feature>
<feature type="binding site" evidence="2">
    <location>
        <position position="9"/>
    </location>
    <ligand>
        <name>diphosphate</name>
        <dbReference type="ChEBI" id="CHEBI:33019"/>
    </ligand>
</feature>
<feature type="binding site" evidence="2">
    <location>
        <position position="11"/>
    </location>
    <ligand>
        <name>diphosphate</name>
        <dbReference type="ChEBI" id="CHEBI:33019"/>
    </ligand>
</feature>
<feature type="binding site" evidence="2">
    <location>
        <position position="12"/>
    </location>
    <ligand>
        <name>diphosphate</name>
        <dbReference type="ChEBI" id="CHEBI:33019"/>
    </ligand>
</feature>
<feature type="binding site" evidence="2">
    <location>
        <position position="13"/>
    </location>
    <ligand>
        <name>diphosphate</name>
        <dbReference type="ChEBI" id="CHEBI:33019"/>
    </ligand>
</feature>
<feature type="binding site" evidence="2">
    <location>
        <position position="23"/>
    </location>
    <ligand>
        <name>diphosphate</name>
        <dbReference type="ChEBI" id="CHEBI:33019"/>
    </ligand>
</feature>
<feature type="binding site" evidence="2">
    <location>
        <position position="85"/>
    </location>
    <ligand>
        <name>GDP-alpha-D-mannose</name>
        <dbReference type="ChEBI" id="CHEBI:57527"/>
    </ligand>
</feature>
<feature type="binding site" evidence="2">
    <location>
        <position position="109"/>
    </location>
    <ligand>
        <name>GDP-alpha-D-mannose</name>
        <dbReference type="ChEBI" id="CHEBI:57527"/>
    </ligand>
</feature>
<feature type="binding site" evidence="2">
    <location>
        <position position="111"/>
    </location>
    <ligand>
        <name>GDP-alpha-D-mannose</name>
        <dbReference type="ChEBI" id="CHEBI:57527"/>
    </ligand>
</feature>
<feature type="binding site" evidence="2">
    <location>
        <position position="146"/>
    </location>
    <ligand>
        <name>GDP-alpha-D-mannose</name>
        <dbReference type="ChEBI" id="CHEBI:57527"/>
    </ligand>
</feature>
<feature type="binding site" evidence="2">
    <location>
        <position position="173"/>
    </location>
    <ligand>
        <name>GDP-alpha-D-mannose</name>
        <dbReference type="ChEBI" id="CHEBI:57527"/>
    </ligand>
</feature>
<reference key="1">
    <citation type="journal article" date="2005" name="Nature">
        <title>The map-based sequence of the rice genome.</title>
        <authorList>
            <consortium name="International rice genome sequencing project (IRGSP)"/>
        </authorList>
    </citation>
    <scope>NUCLEOTIDE SEQUENCE [LARGE SCALE GENOMIC DNA]</scope>
    <source>
        <strain>cv. Nipponbare</strain>
    </source>
</reference>
<reference key="2">
    <citation type="journal article" date="2008" name="Nucleic Acids Res.">
        <title>The rice annotation project database (RAP-DB): 2008 update.</title>
        <authorList>
            <consortium name="The rice annotation project (RAP)"/>
        </authorList>
    </citation>
    <scope>GENOME REANNOTATION</scope>
    <source>
        <strain>cv. Nipponbare</strain>
    </source>
</reference>
<reference key="3">
    <citation type="journal article" date="2013" name="Rice">
        <title>Improvement of the Oryza sativa Nipponbare reference genome using next generation sequence and optical map data.</title>
        <authorList>
            <person name="Kawahara Y."/>
            <person name="de la Bastide M."/>
            <person name="Hamilton J.P."/>
            <person name="Kanamori H."/>
            <person name="McCombie W.R."/>
            <person name="Ouyang S."/>
            <person name="Schwartz D.C."/>
            <person name="Tanaka T."/>
            <person name="Wu J."/>
            <person name="Zhou S."/>
            <person name="Childs K.L."/>
            <person name="Davidson R.M."/>
            <person name="Lin H."/>
            <person name="Quesada-Ocampo L."/>
            <person name="Vaillancourt B."/>
            <person name="Sakai H."/>
            <person name="Lee S.S."/>
            <person name="Kim J."/>
            <person name="Numa H."/>
            <person name="Itoh T."/>
            <person name="Buell C.R."/>
            <person name="Matsumoto T."/>
        </authorList>
    </citation>
    <scope>GENOME REANNOTATION</scope>
    <source>
        <strain>cv. Nipponbare</strain>
    </source>
</reference>
<reference key="4">
    <citation type="journal article" date="2005" name="PLoS Biol.">
        <title>The genomes of Oryza sativa: a history of duplications.</title>
        <authorList>
            <person name="Yu J."/>
            <person name="Wang J."/>
            <person name="Lin W."/>
            <person name="Li S."/>
            <person name="Li H."/>
            <person name="Zhou J."/>
            <person name="Ni P."/>
            <person name="Dong W."/>
            <person name="Hu S."/>
            <person name="Zeng C."/>
            <person name="Zhang J."/>
            <person name="Zhang Y."/>
            <person name="Li R."/>
            <person name="Xu Z."/>
            <person name="Li S."/>
            <person name="Li X."/>
            <person name="Zheng H."/>
            <person name="Cong L."/>
            <person name="Lin L."/>
            <person name="Yin J."/>
            <person name="Geng J."/>
            <person name="Li G."/>
            <person name="Shi J."/>
            <person name="Liu J."/>
            <person name="Lv H."/>
            <person name="Li J."/>
            <person name="Wang J."/>
            <person name="Deng Y."/>
            <person name="Ran L."/>
            <person name="Shi X."/>
            <person name="Wang X."/>
            <person name="Wu Q."/>
            <person name="Li C."/>
            <person name="Ren X."/>
            <person name="Wang J."/>
            <person name="Wang X."/>
            <person name="Li D."/>
            <person name="Liu D."/>
            <person name="Zhang X."/>
            <person name="Ji Z."/>
            <person name="Zhao W."/>
            <person name="Sun Y."/>
            <person name="Zhang Z."/>
            <person name="Bao J."/>
            <person name="Han Y."/>
            <person name="Dong L."/>
            <person name="Ji J."/>
            <person name="Chen P."/>
            <person name="Wu S."/>
            <person name="Liu J."/>
            <person name="Xiao Y."/>
            <person name="Bu D."/>
            <person name="Tan J."/>
            <person name="Yang L."/>
            <person name="Ye C."/>
            <person name="Zhang J."/>
            <person name="Xu J."/>
            <person name="Zhou Y."/>
            <person name="Yu Y."/>
            <person name="Zhang B."/>
            <person name="Zhuang S."/>
            <person name="Wei H."/>
            <person name="Liu B."/>
            <person name="Lei M."/>
            <person name="Yu H."/>
            <person name="Li Y."/>
            <person name="Xu H."/>
            <person name="Wei S."/>
            <person name="He X."/>
            <person name="Fang L."/>
            <person name="Zhang Z."/>
            <person name="Zhang Y."/>
            <person name="Huang X."/>
            <person name="Su Z."/>
            <person name="Tong W."/>
            <person name="Li J."/>
            <person name="Tong Z."/>
            <person name="Li S."/>
            <person name="Ye J."/>
            <person name="Wang L."/>
            <person name="Fang L."/>
            <person name="Lei T."/>
            <person name="Chen C.-S."/>
            <person name="Chen H.-C."/>
            <person name="Xu Z."/>
            <person name="Li H."/>
            <person name="Huang H."/>
            <person name="Zhang F."/>
            <person name="Xu H."/>
            <person name="Li N."/>
            <person name="Zhao C."/>
            <person name="Li S."/>
            <person name="Dong L."/>
            <person name="Huang Y."/>
            <person name="Li L."/>
            <person name="Xi Y."/>
            <person name="Qi Q."/>
            <person name="Li W."/>
            <person name="Zhang B."/>
            <person name="Hu W."/>
            <person name="Zhang Y."/>
            <person name="Tian X."/>
            <person name="Jiao Y."/>
            <person name="Liang X."/>
            <person name="Jin J."/>
            <person name="Gao L."/>
            <person name="Zheng W."/>
            <person name="Hao B."/>
            <person name="Liu S.-M."/>
            <person name="Wang W."/>
            <person name="Yuan L."/>
            <person name="Cao M."/>
            <person name="McDermott J."/>
            <person name="Samudrala R."/>
            <person name="Wang J."/>
            <person name="Wong G.K.-S."/>
            <person name="Yang H."/>
        </authorList>
    </citation>
    <scope>NUCLEOTIDE SEQUENCE [LARGE SCALE GENOMIC DNA]</scope>
    <source>
        <strain>cv. Nipponbare</strain>
    </source>
</reference>
<reference key="5">
    <citation type="submission" date="2006-10" db="EMBL/GenBank/DDBJ databases">
        <title>Oryza sativa full length cDNA.</title>
        <authorList>
            <consortium name="The rice full-length cDNA consortium"/>
        </authorList>
    </citation>
    <scope>NUCLEOTIDE SEQUENCE [LARGE SCALE MRNA]</scope>
    <source>
        <strain>cv. Nipponbare</strain>
    </source>
</reference>
<sequence length="361" mass="39626">MKALILVGGFGTRLRPLTLSFPKPLVDFANKPMILHQIEALKEVGVTEVVLAINYRPEVMLNFLKDFEDKLGITITCSQETEPLGTAGPLALARDKLVDGSGEPFFVLNSDVISEYPFAELIKFHKNHGGEATIMVTKVDEPSKYGVVVMEEATGMVEKFVEKPKIFVGNKINAGIYLLNPSVLDRIELKPTSIEKEVFPRISADAKLFAMVLPGFWMDVGQPRDYITGLRLYLDSLRKRSANRLATGAHIVGNVLVHESAKIGEGCLIGPDVAIGPGCVVEDGVRLSRCTVMRGVRIKKHACISNSIIGWHSTVGQWARIENMTILGEDVHVGDEVYTNGGVILPHKEIKSSILKPEIVM</sequence>
<name>GMPP3_ORYSJ</name>